<organism>
    <name type="scientific">Saccharomyces cerevisiae (strain ATCC 204508 / S288c)</name>
    <name type="common">Baker's yeast</name>
    <dbReference type="NCBI Taxonomy" id="559292"/>
    <lineage>
        <taxon>Eukaryota</taxon>
        <taxon>Fungi</taxon>
        <taxon>Dikarya</taxon>
        <taxon>Ascomycota</taxon>
        <taxon>Saccharomycotina</taxon>
        <taxon>Saccharomycetes</taxon>
        <taxon>Saccharomycetales</taxon>
        <taxon>Saccharomycetaceae</taxon>
        <taxon>Saccharomyces</taxon>
    </lineage>
</organism>
<dbReference type="EC" id="6.4.1.1"/>
<dbReference type="EMBL" id="J03889">
    <property type="protein sequence ID" value="AAA34843.1"/>
    <property type="molecule type" value="Genomic_DNA"/>
</dbReference>
<dbReference type="EMBL" id="Z72584">
    <property type="protein sequence ID" value="CAA96765.1"/>
    <property type="molecule type" value="Genomic_DNA"/>
</dbReference>
<dbReference type="EMBL" id="BK006941">
    <property type="protein sequence ID" value="DAA08040.1"/>
    <property type="molecule type" value="Genomic_DNA"/>
</dbReference>
<dbReference type="PIR" id="S64066">
    <property type="entry name" value="QYBYP"/>
</dbReference>
<dbReference type="RefSeq" id="NP_011453.1">
    <property type="nucleotide sequence ID" value="NM_001180927.1"/>
</dbReference>
<dbReference type="SMR" id="P11154"/>
<dbReference type="BioGRID" id="33185">
    <property type="interactions" value="141"/>
</dbReference>
<dbReference type="DIP" id="DIP-6425N"/>
<dbReference type="FunCoup" id="P11154">
    <property type="interactions" value="783"/>
</dbReference>
<dbReference type="IntAct" id="P11154">
    <property type="interactions" value="25"/>
</dbReference>
<dbReference type="MINT" id="P11154"/>
<dbReference type="STRING" id="4932.YGL062W"/>
<dbReference type="GlyGen" id="P11154">
    <property type="glycosylation" value="1 site"/>
</dbReference>
<dbReference type="iPTMnet" id="P11154"/>
<dbReference type="PaxDb" id="4932-YGL062W"/>
<dbReference type="PeptideAtlas" id="P11154"/>
<dbReference type="EnsemblFungi" id="YGL062W_mRNA">
    <property type="protein sequence ID" value="YGL062W"/>
    <property type="gene ID" value="YGL062W"/>
</dbReference>
<dbReference type="GeneID" id="852818"/>
<dbReference type="KEGG" id="sce:YGL062W"/>
<dbReference type="AGR" id="SGD:S000003030"/>
<dbReference type="SGD" id="S000003030">
    <property type="gene designation" value="PYC1"/>
</dbReference>
<dbReference type="VEuPathDB" id="FungiDB:YGL062W"/>
<dbReference type="eggNOG" id="KOG0369">
    <property type="taxonomic scope" value="Eukaryota"/>
</dbReference>
<dbReference type="GeneTree" id="ENSGT00900000141164"/>
<dbReference type="HOGENOM" id="CLU_000395_0_1_1"/>
<dbReference type="InParanoid" id="P11154"/>
<dbReference type="OMA" id="GQHVFIE"/>
<dbReference type="OrthoDB" id="196847at2759"/>
<dbReference type="BioCyc" id="YEAST:YGL062W-MONOMER"/>
<dbReference type="BRENDA" id="6.4.1.1">
    <property type="organism ID" value="984"/>
</dbReference>
<dbReference type="Reactome" id="R-SCE-196780">
    <property type="pathway name" value="Biotin transport and metabolism"/>
</dbReference>
<dbReference type="Reactome" id="R-SCE-70263">
    <property type="pathway name" value="Gluconeogenesis"/>
</dbReference>
<dbReference type="Reactome" id="R-SCE-70268">
    <property type="pathway name" value="Pyruvate metabolism"/>
</dbReference>
<dbReference type="SABIO-RK" id="P11154"/>
<dbReference type="UniPathway" id="UPA00138"/>
<dbReference type="BioGRID-ORCS" id="852818">
    <property type="hits" value="0 hits in 10 CRISPR screens"/>
</dbReference>
<dbReference type="PRO" id="PR:P11154"/>
<dbReference type="Proteomes" id="UP000002311">
    <property type="component" value="Chromosome VII"/>
</dbReference>
<dbReference type="RNAct" id="P11154">
    <property type="molecule type" value="protein"/>
</dbReference>
<dbReference type="GO" id="GO:0005829">
    <property type="term" value="C:cytosol"/>
    <property type="evidence" value="ECO:0000314"/>
    <property type="project" value="SGD"/>
</dbReference>
<dbReference type="GO" id="GO:0005524">
    <property type="term" value="F:ATP binding"/>
    <property type="evidence" value="ECO:0007669"/>
    <property type="project" value="UniProtKB-KW"/>
</dbReference>
<dbReference type="GO" id="GO:0046872">
    <property type="term" value="F:metal ion binding"/>
    <property type="evidence" value="ECO:0007669"/>
    <property type="project" value="UniProtKB-KW"/>
</dbReference>
<dbReference type="GO" id="GO:0004736">
    <property type="term" value="F:pyruvate carboxylase activity"/>
    <property type="evidence" value="ECO:0000315"/>
    <property type="project" value="SGD"/>
</dbReference>
<dbReference type="GO" id="GO:0006094">
    <property type="term" value="P:gluconeogenesis"/>
    <property type="evidence" value="ECO:0000315"/>
    <property type="project" value="SGD"/>
</dbReference>
<dbReference type="GO" id="GO:0006090">
    <property type="term" value="P:pyruvate metabolic process"/>
    <property type="evidence" value="ECO:0000318"/>
    <property type="project" value="GO_Central"/>
</dbReference>
<dbReference type="CDD" id="cd06850">
    <property type="entry name" value="biotinyl_domain"/>
    <property type="match status" value="1"/>
</dbReference>
<dbReference type="CDD" id="cd07937">
    <property type="entry name" value="DRE_TIM_PC_TC_5S"/>
    <property type="match status" value="1"/>
</dbReference>
<dbReference type="FunFam" id="2.40.50.100:FF:000003">
    <property type="entry name" value="Acetyl-CoA carboxylase biotin carboxyl carrier protein"/>
    <property type="match status" value="1"/>
</dbReference>
<dbReference type="FunFam" id="3.30.1490.20:FF:000018">
    <property type="entry name" value="Biotin carboxylase"/>
    <property type="match status" value="1"/>
</dbReference>
<dbReference type="FunFam" id="3.40.50.20:FF:000010">
    <property type="entry name" value="Propionyl-CoA carboxylase subunit alpha"/>
    <property type="match status" value="1"/>
</dbReference>
<dbReference type="FunFam" id="1.10.10.60:FF:000600">
    <property type="entry name" value="Pyruvate carboxylase"/>
    <property type="match status" value="1"/>
</dbReference>
<dbReference type="FunFam" id="1.10.472.90:FF:000001">
    <property type="entry name" value="Pyruvate carboxylase"/>
    <property type="match status" value="1"/>
</dbReference>
<dbReference type="FunFam" id="3.10.600.10:FF:000007">
    <property type="entry name" value="Pyruvate carboxylase"/>
    <property type="match status" value="1"/>
</dbReference>
<dbReference type="FunFam" id="3.20.20.70:FF:000033">
    <property type="entry name" value="Pyruvate carboxylase"/>
    <property type="match status" value="1"/>
</dbReference>
<dbReference type="FunFam" id="3.30.470.20:FF:000012">
    <property type="entry name" value="Pyruvate carboxylase"/>
    <property type="match status" value="1"/>
</dbReference>
<dbReference type="Gene3D" id="2.40.50.100">
    <property type="match status" value="1"/>
</dbReference>
<dbReference type="Gene3D" id="3.20.20.70">
    <property type="entry name" value="Aldolase class I"/>
    <property type="match status" value="1"/>
</dbReference>
<dbReference type="Gene3D" id="3.30.470.20">
    <property type="entry name" value="ATP-grasp fold, B domain"/>
    <property type="match status" value="1"/>
</dbReference>
<dbReference type="Gene3D" id="1.10.472.90">
    <property type="entry name" value="Conserved carboxylase domain"/>
    <property type="match status" value="1"/>
</dbReference>
<dbReference type="Gene3D" id="1.10.10.60">
    <property type="entry name" value="Homeodomain-like"/>
    <property type="match status" value="1"/>
</dbReference>
<dbReference type="Gene3D" id="3.10.600.10">
    <property type="entry name" value="pyruvate carboxylase f1077a mutant domain"/>
    <property type="match status" value="1"/>
</dbReference>
<dbReference type="InterPro" id="IPR013785">
    <property type="entry name" value="Aldolase_TIM"/>
</dbReference>
<dbReference type="InterPro" id="IPR011761">
    <property type="entry name" value="ATP-grasp"/>
</dbReference>
<dbReference type="InterPro" id="IPR005481">
    <property type="entry name" value="BC-like_N"/>
</dbReference>
<dbReference type="InterPro" id="IPR001882">
    <property type="entry name" value="Biotin_BS"/>
</dbReference>
<dbReference type="InterPro" id="IPR011764">
    <property type="entry name" value="Biotin_carboxylation_dom"/>
</dbReference>
<dbReference type="InterPro" id="IPR005482">
    <property type="entry name" value="Biotin_COase_C"/>
</dbReference>
<dbReference type="InterPro" id="IPR000089">
    <property type="entry name" value="Biotin_lipoyl"/>
</dbReference>
<dbReference type="InterPro" id="IPR003379">
    <property type="entry name" value="Carboxylase_cons_dom"/>
</dbReference>
<dbReference type="InterPro" id="IPR005479">
    <property type="entry name" value="CbamoylP_synth_lsu-like_ATP-bd"/>
</dbReference>
<dbReference type="InterPro" id="IPR055268">
    <property type="entry name" value="PCB-like"/>
</dbReference>
<dbReference type="InterPro" id="IPR016185">
    <property type="entry name" value="PreATP-grasp_dom_sf"/>
</dbReference>
<dbReference type="InterPro" id="IPR000891">
    <property type="entry name" value="PYR_CT"/>
</dbReference>
<dbReference type="InterPro" id="IPR005930">
    <property type="entry name" value="Pyruv_COase"/>
</dbReference>
<dbReference type="InterPro" id="IPR011054">
    <property type="entry name" value="Rudment_hybrid_motif"/>
</dbReference>
<dbReference type="InterPro" id="IPR011053">
    <property type="entry name" value="Single_hybrid_motif"/>
</dbReference>
<dbReference type="NCBIfam" id="NF006761">
    <property type="entry name" value="PRK09282.1"/>
    <property type="match status" value="1"/>
</dbReference>
<dbReference type="NCBIfam" id="NF009554">
    <property type="entry name" value="PRK12999.1"/>
    <property type="match status" value="1"/>
</dbReference>
<dbReference type="NCBIfam" id="TIGR01235">
    <property type="entry name" value="pyruv_carbox"/>
    <property type="match status" value="1"/>
</dbReference>
<dbReference type="PANTHER" id="PTHR43778">
    <property type="entry name" value="PYRUVATE CARBOXYLASE"/>
    <property type="match status" value="1"/>
</dbReference>
<dbReference type="PANTHER" id="PTHR43778:SF2">
    <property type="entry name" value="PYRUVATE CARBOXYLASE, MITOCHONDRIAL"/>
    <property type="match status" value="1"/>
</dbReference>
<dbReference type="Pfam" id="PF02785">
    <property type="entry name" value="Biotin_carb_C"/>
    <property type="match status" value="1"/>
</dbReference>
<dbReference type="Pfam" id="PF00289">
    <property type="entry name" value="Biotin_carb_N"/>
    <property type="match status" value="1"/>
</dbReference>
<dbReference type="Pfam" id="PF00364">
    <property type="entry name" value="Biotin_lipoyl"/>
    <property type="match status" value="1"/>
</dbReference>
<dbReference type="Pfam" id="PF02786">
    <property type="entry name" value="CPSase_L_D2"/>
    <property type="match status" value="1"/>
</dbReference>
<dbReference type="Pfam" id="PF00682">
    <property type="entry name" value="HMGL-like"/>
    <property type="match status" value="1"/>
</dbReference>
<dbReference type="Pfam" id="PF02436">
    <property type="entry name" value="PYC_OADA"/>
    <property type="match status" value="1"/>
</dbReference>
<dbReference type="PIRSF" id="PIRSF001594">
    <property type="entry name" value="Pyruv_carbox"/>
    <property type="match status" value="1"/>
</dbReference>
<dbReference type="SMART" id="SM00878">
    <property type="entry name" value="Biotin_carb_C"/>
    <property type="match status" value="1"/>
</dbReference>
<dbReference type="SUPFAM" id="SSF51569">
    <property type="entry name" value="Aldolase"/>
    <property type="match status" value="1"/>
</dbReference>
<dbReference type="SUPFAM" id="SSF56059">
    <property type="entry name" value="Glutathione synthetase ATP-binding domain-like"/>
    <property type="match status" value="1"/>
</dbReference>
<dbReference type="SUPFAM" id="SSF89000">
    <property type="entry name" value="post-HMGL domain-like"/>
    <property type="match status" value="1"/>
</dbReference>
<dbReference type="SUPFAM" id="SSF52440">
    <property type="entry name" value="PreATP-grasp domain"/>
    <property type="match status" value="1"/>
</dbReference>
<dbReference type="SUPFAM" id="SSF51246">
    <property type="entry name" value="Rudiment single hybrid motif"/>
    <property type="match status" value="1"/>
</dbReference>
<dbReference type="SUPFAM" id="SSF51230">
    <property type="entry name" value="Single hybrid motif"/>
    <property type="match status" value="1"/>
</dbReference>
<dbReference type="PROSITE" id="PS50975">
    <property type="entry name" value="ATP_GRASP"/>
    <property type="match status" value="1"/>
</dbReference>
<dbReference type="PROSITE" id="PS50979">
    <property type="entry name" value="BC"/>
    <property type="match status" value="1"/>
</dbReference>
<dbReference type="PROSITE" id="PS00188">
    <property type="entry name" value="BIOTIN"/>
    <property type="match status" value="1"/>
</dbReference>
<dbReference type="PROSITE" id="PS50968">
    <property type="entry name" value="BIOTINYL_LIPOYL"/>
    <property type="match status" value="1"/>
</dbReference>
<dbReference type="PROSITE" id="PS00866">
    <property type="entry name" value="CPSASE_1"/>
    <property type="match status" value="1"/>
</dbReference>
<dbReference type="PROSITE" id="PS00867">
    <property type="entry name" value="CPSASE_2"/>
    <property type="match status" value="1"/>
</dbReference>
<dbReference type="PROSITE" id="PS50991">
    <property type="entry name" value="PYR_CT"/>
    <property type="match status" value="1"/>
</dbReference>
<name>PYC1_YEAST</name>
<proteinExistence type="evidence at protein level"/>
<sequence length="1178" mass="130099">MSQRKFAGLRDNFNLLGEKNKILVANRGEIPIRIFRTAHELSMQTVAIYSHEDRLSTHKQKADEAYVIGEVGQYTPVGAYLAIDEIISIAQKHQVDFIHPGYGFLSENSEFADKVVKAGITWIGPPAEVIDSVGDKVSARNLAAKANVPTVPGTPGPIETVEEALDFVNEYGYPVIIKAAFGGGGRGMRVVREGDDVADAFQRATSEARTAFGNGTCFVERFLDKPKHIEVQLLADNHGNVVHLFERDCSVQRRHQKVVEVAPAKTLPREVRDAILTDAVKLAKECGYRNAGTAEFLVDNQNRHYFIEINPRIQVEHTITEEITGIDIVAAQIQIAAGASLPQLGLFQDKITTRGFAIQCRITTEDPAKNFQPDTGRIEVYRSAGGNGVRLDGGNAYAGTIISPHYDSMLVKCSCSGSTYEIVRRKMIRALIEFRIRGVKTNIPFLLTLLTNPVFIEGTYWTTFIDDTPQLFQMVSSQNRAQKLLHYLADVAVNGSSIKGQIGLPKLKSNPSVPHLHDAQGNVINVTKSAPPSGWRQVLLEKGPAEFARQVRQFNGTLLMDTTWRDAHQSLLATRVRTHDLATIAPTTAHALAGRFALECWGGATFDVAMRFLHEDPWERLRKLRSLVPNIPFQMLLRGANGVAYSSLPDNAIDHFVKQAKDNGVDIFRVFDALNDLEQLKVGVDAVKKAGGVVEATVCFSGDMLQPGKKYNLDYYLEIAEKIVQMGTHILGIKDMAGTMKPAAAKLLIGSLRAKYPDLPIHVHTHDSAGTAVASMTACALAGADVVDVAINSMSGLTSQPSINALLASLEGNIDTGINVEHVRELDAYWAEMRLLYSCFEADLKGPDPEVYQHEIPGGQLTNLLFQAQQLGLGEQWAETKRAYREANYLLGDIVKVTPTSKVVGDLAQFMVSNKLTSDDVRRLANSLDFPDSVMDFFEGLIGQPYGGFPEPFRSDVLRNKRRKLTCRPGLELEPFDLEKIREDLQNRFGDVDECDVASYNMYPRVYEDFQKMRETYGDLSVLPTRSFLSPLETDEEIEVVIEQGKTLIIKLQAVGDLNKKTGEREVYFDLNGEMRKIRVADRSQKVETVTKSKADMHDPLHIGAPMAGVIVEVKVHKGSLIKKGQPVAVLSAMKMEMIISSPSDGQVKEVFVSDGENVDSSDLLVLLEDQVPVETKA</sequence>
<protein>
    <recommendedName>
        <fullName>Pyruvate carboxylase 1</fullName>
        <ecNumber>6.4.1.1</ecNumber>
    </recommendedName>
    <alternativeName>
        <fullName>Pyruvic carboxylase 1</fullName>
        <shortName>PCB 1</shortName>
    </alternativeName>
</protein>
<evidence type="ECO:0000250" key="1"/>
<evidence type="ECO:0000255" key="2">
    <source>
        <dbReference type="PROSITE-ProRule" id="PRU00409"/>
    </source>
</evidence>
<evidence type="ECO:0000255" key="3">
    <source>
        <dbReference type="PROSITE-ProRule" id="PRU01066"/>
    </source>
</evidence>
<evidence type="ECO:0000255" key="4">
    <source>
        <dbReference type="PROSITE-ProRule" id="PRU01151"/>
    </source>
</evidence>
<evidence type="ECO:0000269" key="5">
    <source>
    </source>
</evidence>
<evidence type="ECO:0000269" key="6">
    <source>
    </source>
</evidence>
<evidence type="ECO:0000305" key="7"/>
<reference key="1">
    <citation type="journal article" date="1988" name="J. Biol. Chem.">
        <title>Sequence and domain structure of yeast pyruvate carboxylase.</title>
        <authorList>
            <person name="Lim F."/>
            <person name="Morris C.P."/>
            <person name="Occhiodoro F."/>
            <person name="Wallace J.C."/>
        </authorList>
    </citation>
    <scope>NUCLEOTIDE SEQUENCE [GENOMIC DNA]</scope>
    <scope>PARTIAL PROTEIN SEQUENCE</scope>
    <scope>BIOTINYLATION AT LYS-1135</scope>
</reference>
<reference key="2">
    <citation type="journal article" date="1997" name="Yeast">
        <title>The characterization of two new clusters of duplicated genes suggests a 'Lego' organization of the yeast Saccharomyces cerevisiae chromosomes.</title>
        <authorList>
            <person name="Feuermann M."/>
            <person name="de Montigny J."/>
            <person name="Potier S."/>
            <person name="Souciet J.-L."/>
        </authorList>
    </citation>
    <scope>NUCLEOTIDE SEQUENCE [GENOMIC DNA]</scope>
    <source>
        <strain>ATCC 204508 / S288c</strain>
    </source>
</reference>
<reference key="3">
    <citation type="journal article" date="1997" name="Nature">
        <title>The nucleotide sequence of Saccharomyces cerevisiae chromosome VII.</title>
        <authorList>
            <person name="Tettelin H."/>
            <person name="Agostoni-Carbone M.L."/>
            <person name="Albermann K."/>
            <person name="Albers M."/>
            <person name="Arroyo J."/>
            <person name="Backes U."/>
            <person name="Barreiros T."/>
            <person name="Bertani I."/>
            <person name="Bjourson A.J."/>
            <person name="Brueckner M."/>
            <person name="Bruschi C.V."/>
            <person name="Carignani G."/>
            <person name="Castagnoli L."/>
            <person name="Cerdan E."/>
            <person name="Clemente M.L."/>
            <person name="Coblenz A."/>
            <person name="Coglievina M."/>
            <person name="Coissac E."/>
            <person name="Defoor E."/>
            <person name="Del Bino S."/>
            <person name="Delius H."/>
            <person name="Delneri D."/>
            <person name="de Wergifosse P."/>
            <person name="Dujon B."/>
            <person name="Durand P."/>
            <person name="Entian K.-D."/>
            <person name="Eraso P."/>
            <person name="Escribano V."/>
            <person name="Fabiani L."/>
            <person name="Fartmann B."/>
            <person name="Feroli F."/>
            <person name="Feuermann M."/>
            <person name="Frontali L."/>
            <person name="Garcia-Gonzalez M."/>
            <person name="Garcia-Saez M.I."/>
            <person name="Goffeau A."/>
            <person name="Guerreiro P."/>
            <person name="Hani J."/>
            <person name="Hansen M."/>
            <person name="Hebling U."/>
            <person name="Hernandez K."/>
            <person name="Heumann K."/>
            <person name="Hilger F."/>
            <person name="Hofmann B."/>
            <person name="Indge K.J."/>
            <person name="James C.M."/>
            <person name="Klima R."/>
            <person name="Koetter P."/>
            <person name="Kramer B."/>
            <person name="Kramer W."/>
            <person name="Lauquin G."/>
            <person name="Leuther H."/>
            <person name="Louis E.J."/>
            <person name="Maillier E."/>
            <person name="Marconi A."/>
            <person name="Martegani E."/>
            <person name="Mazon M.J."/>
            <person name="Mazzoni C."/>
            <person name="McReynolds A.D.K."/>
            <person name="Melchioretto P."/>
            <person name="Mewes H.-W."/>
            <person name="Minenkova O."/>
            <person name="Mueller-Auer S."/>
            <person name="Nawrocki A."/>
            <person name="Netter P."/>
            <person name="Neu R."/>
            <person name="Nombela C."/>
            <person name="Oliver S.G."/>
            <person name="Panzeri L."/>
            <person name="Paoluzi S."/>
            <person name="Plevani P."/>
            <person name="Portetelle D."/>
            <person name="Portillo F."/>
            <person name="Potier S."/>
            <person name="Purnelle B."/>
            <person name="Rieger M."/>
            <person name="Riles L."/>
            <person name="Rinaldi T."/>
            <person name="Robben J."/>
            <person name="Rodrigues-Pousada C."/>
            <person name="Rodriguez-Belmonte E."/>
            <person name="Rodriguez-Torres A.M."/>
            <person name="Rose M."/>
            <person name="Ruzzi M."/>
            <person name="Saliola M."/>
            <person name="Sanchez-Perez M."/>
            <person name="Schaefer B."/>
            <person name="Schaefer M."/>
            <person name="Scharfe M."/>
            <person name="Schmidheini T."/>
            <person name="Schreer A."/>
            <person name="Skala J."/>
            <person name="Souciet J.-L."/>
            <person name="Steensma H.Y."/>
            <person name="Talla E."/>
            <person name="Thierry A."/>
            <person name="Vandenbol M."/>
            <person name="van der Aart Q.J.M."/>
            <person name="Van Dyck L."/>
            <person name="Vanoni M."/>
            <person name="Verhasselt P."/>
            <person name="Voet M."/>
            <person name="Volckaert G."/>
            <person name="Wambutt R."/>
            <person name="Watson M.D."/>
            <person name="Weber N."/>
            <person name="Wedler E."/>
            <person name="Wedler H."/>
            <person name="Wipfli P."/>
            <person name="Wolf K."/>
            <person name="Wright L.F."/>
            <person name="Zaccaria P."/>
            <person name="Zimmermann M."/>
            <person name="Zollner A."/>
            <person name="Kleine K."/>
        </authorList>
    </citation>
    <scope>NUCLEOTIDE SEQUENCE [LARGE SCALE GENOMIC DNA]</scope>
    <source>
        <strain>ATCC 204508 / S288c</strain>
    </source>
</reference>
<reference key="4">
    <citation type="journal article" date="2014" name="G3 (Bethesda)">
        <title>The reference genome sequence of Saccharomyces cerevisiae: Then and now.</title>
        <authorList>
            <person name="Engel S.R."/>
            <person name="Dietrich F.S."/>
            <person name="Fisk D.G."/>
            <person name="Binkley G."/>
            <person name="Balakrishnan R."/>
            <person name="Costanzo M.C."/>
            <person name="Dwight S.S."/>
            <person name="Hitz B.C."/>
            <person name="Karra K."/>
            <person name="Nash R.S."/>
            <person name="Weng S."/>
            <person name="Wong E.D."/>
            <person name="Lloyd P."/>
            <person name="Skrzypek M.S."/>
            <person name="Miyasato S.R."/>
            <person name="Simison M."/>
            <person name="Cherry J.M."/>
        </authorList>
    </citation>
    <scope>GENOME REANNOTATION</scope>
    <source>
        <strain>ATCC 204508 / S288c</strain>
    </source>
</reference>
<reference key="5">
    <citation type="journal article" date="1987" name="Biochem. Biophys. Res. Commun.">
        <title>Yeast pyruvate carboxylase: gene isolation.</title>
        <authorList>
            <person name="Morris C.P."/>
            <person name="Lim F."/>
            <person name="Wallace J.C."/>
        </authorList>
    </citation>
    <scope>NUCLEOTIDE SEQUENCE [GENOMIC DNA] OF 1003-1178</scope>
</reference>
<reference key="6">
    <citation type="journal article" date="2003" name="Nature">
        <title>Global analysis of protein expression in yeast.</title>
        <authorList>
            <person name="Ghaemmaghami S."/>
            <person name="Huh W.-K."/>
            <person name="Bower K."/>
            <person name="Howson R.W."/>
            <person name="Belle A."/>
            <person name="Dephoure N."/>
            <person name="O'Shea E.K."/>
            <person name="Weissman J.S."/>
        </authorList>
    </citation>
    <scope>LEVEL OF PROTEIN EXPRESSION [LARGE SCALE ANALYSIS]</scope>
</reference>
<keyword id="KW-0067">ATP-binding</keyword>
<keyword id="KW-0092">Biotin</keyword>
<keyword id="KW-0963">Cytoplasm</keyword>
<keyword id="KW-0903">Direct protein sequencing</keyword>
<keyword id="KW-0312">Gluconeogenesis</keyword>
<keyword id="KW-0436">Ligase</keyword>
<keyword id="KW-0479">Metal-binding</keyword>
<keyword id="KW-0511">Multifunctional enzyme</keyword>
<keyword id="KW-0547">Nucleotide-binding</keyword>
<keyword id="KW-1185">Reference proteome</keyword>
<keyword id="KW-0862">Zinc</keyword>
<comment type="function">
    <text>Pyruvate carboxylase catalyzes a 2-step reaction, involving the ATP-dependent carboxylation of the covalently attached biotin in the first step and the transfer of the carboxyl group to pyruvate in the second.</text>
</comment>
<comment type="catalytic activity">
    <reaction>
        <text>hydrogencarbonate + pyruvate + ATP = oxaloacetate + ADP + phosphate + H(+)</text>
        <dbReference type="Rhea" id="RHEA:20844"/>
        <dbReference type="ChEBI" id="CHEBI:15361"/>
        <dbReference type="ChEBI" id="CHEBI:15378"/>
        <dbReference type="ChEBI" id="CHEBI:16452"/>
        <dbReference type="ChEBI" id="CHEBI:17544"/>
        <dbReference type="ChEBI" id="CHEBI:30616"/>
        <dbReference type="ChEBI" id="CHEBI:43474"/>
        <dbReference type="ChEBI" id="CHEBI:456216"/>
        <dbReference type="EC" id="6.4.1.1"/>
    </reaction>
</comment>
<comment type="cofactor">
    <cofactor>
        <name>biotin</name>
        <dbReference type="ChEBI" id="CHEBI:57586"/>
    </cofactor>
</comment>
<comment type="cofactor">
    <cofactor>
        <name>Zn(2+)</name>
        <dbReference type="ChEBI" id="CHEBI:29105"/>
    </cofactor>
</comment>
<comment type="pathway">
    <text>Carbohydrate biosynthesis; gluconeogenesis.</text>
</comment>
<comment type="subunit">
    <text>Homotetramer.</text>
</comment>
<comment type="interaction">
    <interactant intactId="EBI-14358">
        <id>P11154</id>
    </interactant>
    <interactant intactId="EBI-14365">
        <id>P32327</id>
        <label>PYC2</label>
    </interactant>
    <organismsDiffer>false</organismsDiffer>
    <experiments>3</experiments>
</comment>
<comment type="interaction">
    <interactant intactId="EBI-14358">
        <id>P11154</id>
    </interactant>
    <interactant intactId="EBI-16219">
        <id>P39940</id>
        <label>RSP5</label>
    </interactant>
    <organismsDiffer>false</organismsDiffer>
    <experiments>2</experiments>
</comment>
<comment type="subcellular location">
    <subcellularLocation>
        <location>Cytoplasm</location>
    </subcellularLocation>
</comment>
<comment type="miscellaneous">
    <text evidence="5">Present with 12500 molecules/cell in log phase SD medium.</text>
</comment>
<feature type="chain" id="PRO_0000146824" description="Pyruvate carboxylase 1">
    <location>
        <begin position="1"/>
        <end position="1178"/>
    </location>
</feature>
<feature type="domain" description="Biotin carboxylation">
    <location>
        <begin position="18"/>
        <end position="470"/>
    </location>
</feature>
<feature type="domain" description="ATP-grasp" evidence="2">
    <location>
        <begin position="140"/>
        <end position="337"/>
    </location>
</feature>
<feature type="domain" description="Pyruvate carboxyltransferase" evidence="4">
    <location>
        <begin position="557"/>
        <end position="824"/>
    </location>
</feature>
<feature type="domain" description="Biotinyl-binding" evidence="3">
    <location>
        <begin position="1094"/>
        <end position="1169"/>
    </location>
</feature>
<feature type="active site" evidence="1">
    <location>
        <position position="312"/>
    </location>
</feature>
<feature type="binding site" evidence="1">
    <location>
        <position position="136"/>
    </location>
    <ligand>
        <name>ATP</name>
        <dbReference type="ChEBI" id="CHEBI:30616"/>
    </ligand>
</feature>
<feature type="binding site" evidence="1">
    <location>
        <position position="220"/>
    </location>
    <ligand>
        <name>ATP</name>
        <dbReference type="ChEBI" id="CHEBI:30616"/>
    </ligand>
</feature>
<feature type="binding site" evidence="1">
    <location>
        <position position="255"/>
    </location>
    <ligand>
        <name>ATP</name>
        <dbReference type="ChEBI" id="CHEBI:30616"/>
    </ligand>
</feature>
<feature type="binding site" evidence="1">
    <location>
        <begin position="565"/>
        <end position="569"/>
    </location>
    <ligand>
        <name>substrate</name>
    </ligand>
</feature>
<feature type="binding site" evidence="1">
    <location>
        <position position="566"/>
    </location>
    <ligand>
        <name>a divalent metal cation</name>
        <dbReference type="ChEBI" id="CHEBI:60240"/>
    </ligand>
</feature>
<feature type="binding site" evidence="1">
    <location>
        <position position="638"/>
    </location>
    <ligand>
        <name>substrate</name>
    </ligand>
</feature>
<feature type="binding site" description="via carbamate group" evidence="1">
    <location>
        <position position="734"/>
    </location>
    <ligand>
        <name>a divalent metal cation</name>
        <dbReference type="ChEBI" id="CHEBI:60240"/>
    </ligand>
</feature>
<feature type="binding site" evidence="1">
    <location>
        <position position="764"/>
    </location>
    <ligand>
        <name>a divalent metal cation</name>
        <dbReference type="ChEBI" id="CHEBI:60240"/>
    </ligand>
</feature>
<feature type="binding site" evidence="1">
    <location>
        <position position="766"/>
    </location>
    <ligand>
        <name>a divalent metal cation</name>
        <dbReference type="ChEBI" id="CHEBI:60240"/>
    </ligand>
</feature>
<feature type="binding site" evidence="1">
    <location>
        <position position="898"/>
    </location>
    <ligand>
        <name>substrate</name>
    </ligand>
</feature>
<feature type="modified residue" description="N6-carboxylysine" evidence="1">
    <location>
        <position position="734"/>
    </location>
</feature>
<feature type="modified residue" description="N6-biotinyllysine" evidence="3 6">
    <location>
        <position position="1135"/>
    </location>
</feature>
<feature type="sequence conflict" description="In Ref. 1; AAA34843." evidence="7" ref="1">
    <original>T</original>
    <variation>G</variation>
    <location>
        <position position="462"/>
    </location>
</feature>
<feature type="sequence conflict" description="In Ref. 1; AAA34843." evidence="7" ref="1">
    <original>V</original>
    <variation>D</variation>
    <location>
        <position position="493"/>
    </location>
</feature>
<feature type="sequence conflict" description="In Ref. 1; AAA34843." evidence="7" ref="1">
    <original>R</original>
    <variation>A</variation>
    <location>
        <position position="595"/>
    </location>
</feature>
<feature type="sequence conflict" description="In Ref. 1; AAA34843." evidence="7" ref="1">
    <original>E</original>
    <variation>Q</variation>
    <location>
        <position position="619"/>
    </location>
</feature>
<feature type="sequence conflict" description="In Ref. 1; AAA34843." evidence="7" ref="1">
    <original>G</original>
    <variation>S</variation>
    <location>
        <position position="664"/>
    </location>
</feature>
<feature type="sequence conflict" description="In Ref. 1; AAA34843." evidence="7" ref="1">
    <original>A</original>
    <variation>R</variation>
    <location>
        <position position="772"/>
    </location>
</feature>
<feature type="sequence conflict" description="In Ref. 1; AAA34843." evidence="7" ref="1">
    <original>E</original>
    <variation>Q</variation>
    <location>
        <position position="879"/>
    </location>
</feature>
<feature type="sequence conflict" description="In Ref. 1; AAA34843." evidence="7" ref="1">
    <original>Q</original>
    <variation>K</variation>
    <location>
        <position position="909"/>
    </location>
</feature>
<gene>
    <name type="primary">PYC1</name>
    <name type="synonym">PYV</name>
    <name type="ordered locus">YGL062W</name>
</gene>
<accession>P11154</accession>
<accession>D6VU79</accession>